<gene>
    <name evidence="1" type="primary">bioB</name>
    <name type="ordered locus">Bcer98_2813</name>
</gene>
<organism>
    <name type="scientific">Bacillus cytotoxicus (strain DSM 22905 / CIP 110041 / 391-98 / NVH 391-98)</name>
    <dbReference type="NCBI Taxonomy" id="315749"/>
    <lineage>
        <taxon>Bacteria</taxon>
        <taxon>Bacillati</taxon>
        <taxon>Bacillota</taxon>
        <taxon>Bacilli</taxon>
        <taxon>Bacillales</taxon>
        <taxon>Bacillaceae</taxon>
        <taxon>Bacillus</taxon>
        <taxon>Bacillus cereus group</taxon>
    </lineage>
</organism>
<reference key="1">
    <citation type="journal article" date="2008" name="Chem. Biol. Interact.">
        <title>Extending the Bacillus cereus group genomics to putative food-borne pathogens of different toxicity.</title>
        <authorList>
            <person name="Lapidus A."/>
            <person name="Goltsman E."/>
            <person name="Auger S."/>
            <person name="Galleron N."/>
            <person name="Segurens B."/>
            <person name="Dossat C."/>
            <person name="Land M.L."/>
            <person name="Broussolle V."/>
            <person name="Brillard J."/>
            <person name="Guinebretiere M.-H."/>
            <person name="Sanchis V."/>
            <person name="Nguen-the C."/>
            <person name="Lereclus D."/>
            <person name="Richardson P."/>
            <person name="Wincker P."/>
            <person name="Weissenbach J."/>
            <person name="Ehrlich S.D."/>
            <person name="Sorokin A."/>
        </authorList>
    </citation>
    <scope>NUCLEOTIDE SEQUENCE [LARGE SCALE GENOMIC DNA]</scope>
    <source>
        <strain>DSM 22905 / CIP 110041 / 391-98 / NVH 391-98</strain>
    </source>
</reference>
<keyword id="KW-0001">2Fe-2S</keyword>
<keyword id="KW-0004">4Fe-4S</keyword>
<keyword id="KW-0093">Biotin biosynthesis</keyword>
<keyword id="KW-0408">Iron</keyword>
<keyword id="KW-0411">Iron-sulfur</keyword>
<keyword id="KW-0479">Metal-binding</keyword>
<keyword id="KW-0949">S-adenosyl-L-methionine</keyword>
<keyword id="KW-0808">Transferase</keyword>
<accession>A7GSD8</accession>
<sequence length="332" mass="37185">MKQIQTKVDWKKIAFEGIEGKRITKEDALAILEADDTEVLEIMNAAYMIRHHYFGKKVKLNMIINTKSGLCPEDCGYCSQSIVSEAPIDKYAWLTQEKIVEGAHEAVRRKAGTYCIVASGRRPTDKEVNHVIGAVKEIKETTDLKICCCLGFLNEDQAKRLAEAGVHRYNHNLNTHANHYDNICSTHTYDDRVDTVEKVKQAGISPCSGAIFGMGETKEERVEIAFELQRLDADSIPCNFLVSVKGTPFEGRKELTPVECLKILAMMRFVNPSKEIRISGGRELNLRSVQPLGLFAANSIFVGDYLTTVGQESTADWEMIQDLGFEIEECAL</sequence>
<comment type="function">
    <text evidence="1">Catalyzes the conversion of dethiobiotin (DTB) to biotin by the insertion of a sulfur atom into dethiobiotin via a radical-based mechanism.</text>
</comment>
<comment type="catalytic activity">
    <reaction evidence="1">
        <text>(4R,5S)-dethiobiotin + (sulfur carrier)-SH + 2 reduced [2Fe-2S]-[ferredoxin] + 2 S-adenosyl-L-methionine = (sulfur carrier)-H + biotin + 2 5'-deoxyadenosine + 2 L-methionine + 2 oxidized [2Fe-2S]-[ferredoxin]</text>
        <dbReference type="Rhea" id="RHEA:22060"/>
        <dbReference type="Rhea" id="RHEA-COMP:10000"/>
        <dbReference type="Rhea" id="RHEA-COMP:10001"/>
        <dbReference type="Rhea" id="RHEA-COMP:14737"/>
        <dbReference type="Rhea" id="RHEA-COMP:14739"/>
        <dbReference type="ChEBI" id="CHEBI:17319"/>
        <dbReference type="ChEBI" id="CHEBI:29917"/>
        <dbReference type="ChEBI" id="CHEBI:33737"/>
        <dbReference type="ChEBI" id="CHEBI:33738"/>
        <dbReference type="ChEBI" id="CHEBI:57586"/>
        <dbReference type="ChEBI" id="CHEBI:57844"/>
        <dbReference type="ChEBI" id="CHEBI:59789"/>
        <dbReference type="ChEBI" id="CHEBI:64428"/>
        <dbReference type="ChEBI" id="CHEBI:149473"/>
        <dbReference type="EC" id="2.8.1.6"/>
    </reaction>
</comment>
<comment type="cofactor">
    <cofactor evidence="1">
        <name>[4Fe-4S] cluster</name>
        <dbReference type="ChEBI" id="CHEBI:49883"/>
    </cofactor>
    <text evidence="1">Binds 1 [4Fe-4S] cluster. The cluster is coordinated with 3 cysteines and an exchangeable S-adenosyl-L-methionine.</text>
</comment>
<comment type="cofactor">
    <cofactor evidence="1">
        <name>[2Fe-2S] cluster</name>
        <dbReference type="ChEBI" id="CHEBI:190135"/>
    </cofactor>
    <text evidence="1">Binds 1 [2Fe-2S] cluster. The cluster is coordinated with 3 cysteines and 1 arginine.</text>
</comment>
<comment type="pathway">
    <text evidence="1">Cofactor biosynthesis; biotin biosynthesis; biotin from 7,8-diaminononanoate: step 2/2.</text>
</comment>
<comment type="subunit">
    <text evidence="1">Homodimer.</text>
</comment>
<comment type="similarity">
    <text evidence="1">Belongs to the radical SAM superfamily. Biotin synthase family.</text>
</comment>
<protein>
    <recommendedName>
        <fullName evidence="1">Biotin synthase</fullName>
        <ecNumber evidence="1">2.8.1.6</ecNumber>
    </recommendedName>
</protein>
<proteinExistence type="inferred from homology"/>
<feature type="chain" id="PRO_0000381223" description="Biotin synthase">
    <location>
        <begin position="1"/>
        <end position="332"/>
    </location>
</feature>
<feature type="domain" description="Radical SAM core" evidence="2">
    <location>
        <begin position="53"/>
        <end position="282"/>
    </location>
</feature>
<feature type="binding site" evidence="1">
    <location>
        <position position="71"/>
    </location>
    <ligand>
        <name>[4Fe-4S] cluster</name>
        <dbReference type="ChEBI" id="CHEBI:49883"/>
        <note>4Fe-4S-S-AdoMet</note>
    </ligand>
</feature>
<feature type="binding site" evidence="1">
    <location>
        <position position="75"/>
    </location>
    <ligand>
        <name>[4Fe-4S] cluster</name>
        <dbReference type="ChEBI" id="CHEBI:49883"/>
        <note>4Fe-4S-S-AdoMet</note>
    </ligand>
</feature>
<feature type="binding site" evidence="1">
    <location>
        <position position="78"/>
    </location>
    <ligand>
        <name>[4Fe-4S] cluster</name>
        <dbReference type="ChEBI" id="CHEBI:49883"/>
        <note>4Fe-4S-S-AdoMet</note>
    </ligand>
</feature>
<feature type="binding site" evidence="1">
    <location>
        <position position="115"/>
    </location>
    <ligand>
        <name>[2Fe-2S] cluster</name>
        <dbReference type="ChEBI" id="CHEBI:190135"/>
    </ligand>
</feature>
<feature type="binding site" evidence="1">
    <location>
        <position position="147"/>
    </location>
    <ligand>
        <name>[2Fe-2S] cluster</name>
        <dbReference type="ChEBI" id="CHEBI:190135"/>
    </ligand>
</feature>
<feature type="binding site" evidence="1">
    <location>
        <position position="207"/>
    </location>
    <ligand>
        <name>[2Fe-2S] cluster</name>
        <dbReference type="ChEBI" id="CHEBI:190135"/>
    </ligand>
</feature>
<feature type="binding site" evidence="1">
    <location>
        <position position="277"/>
    </location>
    <ligand>
        <name>[2Fe-2S] cluster</name>
        <dbReference type="ChEBI" id="CHEBI:190135"/>
    </ligand>
</feature>
<dbReference type="EC" id="2.8.1.6" evidence="1"/>
<dbReference type="EMBL" id="CP000764">
    <property type="protein sequence ID" value="ABS23046.1"/>
    <property type="molecule type" value="Genomic_DNA"/>
</dbReference>
<dbReference type="RefSeq" id="WP_012095272.1">
    <property type="nucleotide sequence ID" value="NC_009674.1"/>
</dbReference>
<dbReference type="SMR" id="A7GSD8"/>
<dbReference type="STRING" id="315749.Bcer98_2813"/>
<dbReference type="GeneID" id="33898069"/>
<dbReference type="KEGG" id="bcy:Bcer98_2813"/>
<dbReference type="eggNOG" id="COG0502">
    <property type="taxonomic scope" value="Bacteria"/>
</dbReference>
<dbReference type="HOGENOM" id="CLU_033172_2_1_9"/>
<dbReference type="OrthoDB" id="9786826at2"/>
<dbReference type="UniPathway" id="UPA00078">
    <property type="reaction ID" value="UER00162"/>
</dbReference>
<dbReference type="Proteomes" id="UP000002300">
    <property type="component" value="Chromosome"/>
</dbReference>
<dbReference type="GO" id="GO:0051537">
    <property type="term" value="F:2 iron, 2 sulfur cluster binding"/>
    <property type="evidence" value="ECO:0007669"/>
    <property type="project" value="UniProtKB-KW"/>
</dbReference>
<dbReference type="GO" id="GO:0051539">
    <property type="term" value="F:4 iron, 4 sulfur cluster binding"/>
    <property type="evidence" value="ECO:0007669"/>
    <property type="project" value="UniProtKB-KW"/>
</dbReference>
<dbReference type="GO" id="GO:0004076">
    <property type="term" value="F:biotin synthase activity"/>
    <property type="evidence" value="ECO:0007669"/>
    <property type="project" value="UniProtKB-UniRule"/>
</dbReference>
<dbReference type="GO" id="GO:0005506">
    <property type="term" value="F:iron ion binding"/>
    <property type="evidence" value="ECO:0007669"/>
    <property type="project" value="UniProtKB-UniRule"/>
</dbReference>
<dbReference type="GO" id="GO:0009102">
    <property type="term" value="P:biotin biosynthetic process"/>
    <property type="evidence" value="ECO:0007669"/>
    <property type="project" value="UniProtKB-UniRule"/>
</dbReference>
<dbReference type="CDD" id="cd01335">
    <property type="entry name" value="Radical_SAM"/>
    <property type="match status" value="1"/>
</dbReference>
<dbReference type="FunFam" id="3.20.20.70:FF:000026">
    <property type="entry name" value="Biotin synthase"/>
    <property type="match status" value="1"/>
</dbReference>
<dbReference type="Gene3D" id="3.20.20.70">
    <property type="entry name" value="Aldolase class I"/>
    <property type="match status" value="1"/>
</dbReference>
<dbReference type="HAMAP" id="MF_01694">
    <property type="entry name" value="BioB"/>
    <property type="match status" value="1"/>
</dbReference>
<dbReference type="InterPro" id="IPR013785">
    <property type="entry name" value="Aldolase_TIM"/>
</dbReference>
<dbReference type="InterPro" id="IPR010722">
    <property type="entry name" value="BATS_dom"/>
</dbReference>
<dbReference type="InterPro" id="IPR002684">
    <property type="entry name" value="Biotin_synth/BioAB"/>
</dbReference>
<dbReference type="InterPro" id="IPR024177">
    <property type="entry name" value="Biotin_synthase"/>
</dbReference>
<dbReference type="InterPro" id="IPR006638">
    <property type="entry name" value="Elp3/MiaA/NifB-like_rSAM"/>
</dbReference>
<dbReference type="InterPro" id="IPR007197">
    <property type="entry name" value="rSAM"/>
</dbReference>
<dbReference type="NCBIfam" id="TIGR00433">
    <property type="entry name" value="bioB"/>
    <property type="match status" value="1"/>
</dbReference>
<dbReference type="PANTHER" id="PTHR22976">
    <property type="entry name" value="BIOTIN SYNTHASE"/>
    <property type="match status" value="1"/>
</dbReference>
<dbReference type="PANTHER" id="PTHR22976:SF2">
    <property type="entry name" value="BIOTIN SYNTHASE, MITOCHONDRIAL"/>
    <property type="match status" value="1"/>
</dbReference>
<dbReference type="Pfam" id="PF06968">
    <property type="entry name" value="BATS"/>
    <property type="match status" value="1"/>
</dbReference>
<dbReference type="Pfam" id="PF04055">
    <property type="entry name" value="Radical_SAM"/>
    <property type="match status" value="1"/>
</dbReference>
<dbReference type="PIRSF" id="PIRSF001619">
    <property type="entry name" value="Biotin_synth"/>
    <property type="match status" value="1"/>
</dbReference>
<dbReference type="SFLD" id="SFLDG01060">
    <property type="entry name" value="BATS_domain_containing"/>
    <property type="match status" value="1"/>
</dbReference>
<dbReference type="SFLD" id="SFLDG01278">
    <property type="entry name" value="biotin_synthase_like"/>
    <property type="match status" value="1"/>
</dbReference>
<dbReference type="SMART" id="SM00876">
    <property type="entry name" value="BATS"/>
    <property type="match status" value="1"/>
</dbReference>
<dbReference type="SMART" id="SM00729">
    <property type="entry name" value="Elp3"/>
    <property type="match status" value="1"/>
</dbReference>
<dbReference type="SUPFAM" id="SSF102114">
    <property type="entry name" value="Radical SAM enzymes"/>
    <property type="match status" value="1"/>
</dbReference>
<dbReference type="PROSITE" id="PS51918">
    <property type="entry name" value="RADICAL_SAM"/>
    <property type="match status" value="1"/>
</dbReference>
<name>BIOB_BACCN</name>
<evidence type="ECO:0000255" key="1">
    <source>
        <dbReference type="HAMAP-Rule" id="MF_01694"/>
    </source>
</evidence>
<evidence type="ECO:0000255" key="2">
    <source>
        <dbReference type="PROSITE-ProRule" id="PRU01266"/>
    </source>
</evidence>